<sequence>MSSLVLIPCALLTQGIYAGLIGAISTVTMSACSAIRSIYNYKNADVNHIIKLLDIERKLIIIQSILNITTNSDTLSGKTPLELTDLEKTHVFELIKKKTDLTKDPIQLCLIFLHEAIENIHKDLSVIHEKIDYHNNKWFNYWRSLNIKHLITNLEADIIIMNERFDYLMKISAFLDHIKDSKKQINSMRWNLSNPIDRKLLFQSLD</sequence>
<evidence type="ECO:0000255" key="1"/>
<name>YL717_MIMIV</name>
<accession>Q5UNX0</accession>
<proteinExistence type="inferred from homology"/>
<keyword id="KW-1185">Reference proteome</keyword>
<keyword id="KW-0732">Signal</keyword>
<organism>
    <name type="scientific">Acanthamoeba polyphaga mimivirus</name>
    <name type="common">APMV</name>
    <dbReference type="NCBI Taxonomy" id="212035"/>
    <lineage>
        <taxon>Viruses</taxon>
        <taxon>Varidnaviria</taxon>
        <taxon>Bamfordvirae</taxon>
        <taxon>Nucleocytoviricota</taxon>
        <taxon>Megaviricetes</taxon>
        <taxon>Imitervirales</taxon>
        <taxon>Mimiviridae</taxon>
        <taxon>Megamimivirinae</taxon>
        <taxon>Mimivirus</taxon>
        <taxon>Mimivirus bradfordmassiliense</taxon>
    </lineage>
</organism>
<reference key="1">
    <citation type="journal article" date="2004" name="Science">
        <title>The 1.2-megabase genome sequence of Mimivirus.</title>
        <authorList>
            <person name="Raoult D."/>
            <person name="Audic S."/>
            <person name="Robert C."/>
            <person name="Abergel C."/>
            <person name="Renesto P."/>
            <person name="Ogata H."/>
            <person name="La Scola B."/>
            <person name="Susan M."/>
            <person name="Claverie J.-M."/>
        </authorList>
    </citation>
    <scope>NUCLEOTIDE SEQUENCE [LARGE SCALE GENOMIC DNA]</scope>
    <source>
        <strain>Rowbotham-Bradford</strain>
    </source>
</reference>
<dbReference type="EMBL" id="AY653733">
    <property type="protein sequence ID" value="AAV50977.1"/>
    <property type="molecule type" value="Genomic_DNA"/>
</dbReference>
<dbReference type="SMR" id="Q5UNX0"/>
<dbReference type="KEGG" id="vg:9925371"/>
<dbReference type="OrthoDB" id="21104at10239"/>
<dbReference type="Proteomes" id="UP000001134">
    <property type="component" value="Genome"/>
</dbReference>
<organismHost>
    <name type="scientific">Acanthamoeba polyphaga</name>
    <name type="common">Amoeba</name>
    <dbReference type="NCBI Taxonomy" id="5757"/>
</organismHost>
<feature type="signal peptide" evidence="1">
    <location>
        <begin position="1"/>
        <end position="18"/>
    </location>
</feature>
<feature type="chain" id="PRO_0000041833" description="Uncharacterized protein L717">
    <location>
        <begin position="19"/>
        <end position="206"/>
    </location>
</feature>
<gene>
    <name type="ordered locus">MIMI_L717</name>
</gene>
<protein>
    <recommendedName>
        <fullName>Uncharacterized protein L717</fullName>
    </recommendedName>
</protein>